<keyword id="KW-0067">ATP-binding</keyword>
<keyword id="KW-0347">Helicase</keyword>
<keyword id="KW-0378">Hydrolase</keyword>
<keyword id="KW-0547">Nucleotide-binding</keyword>
<keyword id="KW-0539">Nucleus</keyword>
<keyword id="KW-1185">Reference proteome</keyword>
<keyword id="KW-0690">Ribosome biogenesis</keyword>
<keyword id="KW-0694">RNA-binding</keyword>
<keyword id="KW-0698">rRNA processing</keyword>
<protein>
    <recommendedName>
        <fullName>ATP-dependent RNA helicase DBP3</fullName>
        <ecNumber>3.6.4.13</ecNumber>
    </recommendedName>
</protein>
<feature type="chain" id="PRO_0000255992" description="ATP-dependent RNA helicase DBP3">
    <location>
        <begin position="1"/>
        <end position="566"/>
    </location>
</feature>
<feature type="domain" description="Helicase ATP-binding" evidence="2">
    <location>
        <begin position="212"/>
        <end position="396"/>
    </location>
</feature>
<feature type="domain" description="Helicase C-terminal" evidence="3">
    <location>
        <begin position="433"/>
        <end position="566"/>
    </location>
</feature>
<feature type="region of interest" description="Disordered" evidence="4">
    <location>
        <begin position="1"/>
        <end position="139"/>
    </location>
</feature>
<feature type="short sequence motif" description="Q motif">
    <location>
        <begin position="182"/>
        <end position="209"/>
    </location>
</feature>
<feature type="short sequence motif" description="DEAD box">
    <location>
        <begin position="342"/>
        <end position="345"/>
    </location>
</feature>
<feature type="compositionally biased region" description="Basic residues" evidence="4">
    <location>
        <begin position="39"/>
        <end position="58"/>
    </location>
</feature>
<feature type="compositionally biased region" description="Basic and acidic residues" evidence="4">
    <location>
        <begin position="81"/>
        <end position="91"/>
    </location>
</feature>
<feature type="compositionally biased region" description="Basic residues" evidence="4">
    <location>
        <begin position="92"/>
        <end position="102"/>
    </location>
</feature>
<feature type="compositionally biased region" description="Polar residues" evidence="4">
    <location>
        <begin position="127"/>
        <end position="139"/>
    </location>
</feature>
<feature type="binding site" evidence="2">
    <location>
        <begin position="225"/>
        <end position="232"/>
    </location>
    <ligand>
        <name>ATP</name>
        <dbReference type="ChEBI" id="CHEBI:30616"/>
    </ligand>
</feature>
<reference key="1">
    <citation type="journal article" date="2015" name="Genome Announc.">
        <title>Draft genome sequence of the cellulolytic fungus Chaetomium globosum.</title>
        <authorList>
            <person name="Cuomo C.A."/>
            <person name="Untereiner W.A."/>
            <person name="Ma L.-J."/>
            <person name="Grabherr M."/>
            <person name="Birren B.W."/>
        </authorList>
    </citation>
    <scope>NUCLEOTIDE SEQUENCE [LARGE SCALE GENOMIC DNA]</scope>
    <source>
        <strain>ATCC 6205 / CBS 148.51 / DSM 1962 / NBRC 6347 / NRRL 1970</strain>
    </source>
</reference>
<sequence>MSAGKKHARDGEDQGARLVKKAKTADTQTDSDPAALKTDKKKKDKKDKKERKEKKEKKSKKEDAEEDSEELQNGDSAAVDSEPKPEKEKKEKNNKKDKKDKKDKKDKLKSSGAPTTNGIAQDGEANAATTTPNGSAQRNGAAYSYQQTKTLDAIPEDEIKEFLAKQEIAIADPLGANLRPIIHFSHLPTSTLTSKKPFASFTAPTPIQAASWPFALSGRDVIGIAETGSGKTMAFAVPCIESLASSPKPNHAKGDRTAYARAVVVSPTRELAMQTHAAMSSLASLVGLSVVCLYGGAPKDDQRALLRKNSGADIIVATPGRLKDFLSEGCVSLSDVMFAVLDEADRMLDKGFEEDIKLILGSCRPREKRQTLMFTATWPTSVRGLAEGFMIDPVKATIGNRTRAGEEGEGNGSTELQANIRIEQKVEVVDPRGKEQRLLELLKEAQKGSAKNDRILVFCLYKKEAVRVEQNLERRGIRVCSIHGDLRQDQRTRSLESFKAGTTSVLVATDVAARGLDIPEVKLVINVTFPLTIEDYVHRIGRTGRAGKKGKAITLFTEHDKSHSGS</sequence>
<comment type="function">
    <text evidence="1">ATP-dependent RNA helicase required for 60S ribosomal subunit synthesis. Involved in efficient pre-rRNA processing, predominantly at site A3, which is necessary for the normal formation of 25S and 5.8S rRNAs (By similarity).</text>
</comment>
<comment type="catalytic activity">
    <reaction>
        <text>ATP + H2O = ADP + phosphate + H(+)</text>
        <dbReference type="Rhea" id="RHEA:13065"/>
        <dbReference type="ChEBI" id="CHEBI:15377"/>
        <dbReference type="ChEBI" id="CHEBI:15378"/>
        <dbReference type="ChEBI" id="CHEBI:30616"/>
        <dbReference type="ChEBI" id="CHEBI:43474"/>
        <dbReference type="ChEBI" id="CHEBI:456216"/>
        <dbReference type="EC" id="3.6.4.13"/>
    </reaction>
</comment>
<comment type="subcellular location">
    <subcellularLocation>
        <location evidence="1">Nucleus</location>
        <location evidence="1">Nucleolus</location>
    </subcellularLocation>
</comment>
<comment type="domain">
    <text>The Q motif is unique to and characteristic of the DEAD box family of RNA helicases and controls ATP binding and hydrolysis.</text>
</comment>
<comment type="similarity">
    <text evidence="5">Belongs to the DEAD box helicase family. DDX5/DBP2 subfamily.</text>
</comment>
<gene>
    <name type="primary">DBP3</name>
    <name type="ORF">CHGG_08370</name>
</gene>
<proteinExistence type="inferred from homology"/>
<dbReference type="EC" id="3.6.4.13"/>
<dbReference type="EMBL" id="CH408034">
    <property type="protein sequence ID" value="EAQ84356.1"/>
    <property type="molecule type" value="Genomic_DNA"/>
</dbReference>
<dbReference type="RefSeq" id="XP_001226297.1">
    <property type="nucleotide sequence ID" value="XM_001226296.1"/>
</dbReference>
<dbReference type="SMR" id="Q2GUI4"/>
<dbReference type="FunCoup" id="Q2GUI4">
    <property type="interactions" value="348"/>
</dbReference>
<dbReference type="STRING" id="306901.Q2GUI4"/>
<dbReference type="GeneID" id="4394736"/>
<dbReference type="VEuPathDB" id="FungiDB:CHGG_08370"/>
<dbReference type="eggNOG" id="KOG0331">
    <property type="taxonomic scope" value="Eukaryota"/>
</dbReference>
<dbReference type="HOGENOM" id="CLU_003041_1_5_1"/>
<dbReference type="InParanoid" id="Q2GUI4"/>
<dbReference type="OMA" id="KKTHDMY"/>
<dbReference type="OrthoDB" id="196131at2759"/>
<dbReference type="Proteomes" id="UP000001056">
    <property type="component" value="Unassembled WGS sequence"/>
</dbReference>
<dbReference type="GO" id="GO:0005730">
    <property type="term" value="C:nucleolus"/>
    <property type="evidence" value="ECO:0007669"/>
    <property type="project" value="UniProtKB-SubCell"/>
</dbReference>
<dbReference type="GO" id="GO:0030687">
    <property type="term" value="C:preribosome, large subunit precursor"/>
    <property type="evidence" value="ECO:0007669"/>
    <property type="project" value="EnsemblFungi"/>
</dbReference>
<dbReference type="GO" id="GO:0005524">
    <property type="term" value="F:ATP binding"/>
    <property type="evidence" value="ECO:0007669"/>
    <property type="project" value="UniProtKB-KW"/>
</dbReference>
<dbReference type="GO" id="GO:0016887">
    <property type="term" value="F:ATP hydrolysis activity"/>
    <property type="evidence" value="ECO:0007669"/>
    <property type="project" value="RHEA"/>
</dbReference>
<dbReference type="GO" id="GO:0003723">
    <property type="term" value="F:RNA binding"/>
    <property type="evidence" value="ECO:0007669"/>
    <property type="project" value="UniProtKB-KW"/>
</dbReference>
<dbReference type="GO" id="GO:0003724">
    <property type="term" value="F:RNA helicase activity"/>
    <property type="evidence" value="ECO:0007669"/>
    <property type="project" value="UniProtKB-EC"/>
</dbReference>
<dbReference type="GO" id="GO:0000464">
    <property type="term" value="P:endonucleolytic cleavage in ITS1 upstream of 5.8S rRNA from tricistronic rRNA transcript (SSU-rRNA, 5.8S rRNA, LSU-rRNA)"/>
    <property type="evidence" value="ECO:0007669"/>
    <property type="project" value="EnsemblFungi"/>
</dbReference>
<dbReference type="CDD" id="cd00268">
    <property type="entry name" value="DEADc"/>
    <property type="match status" value="1"/>
</dbReference>
<dbReference type="CDD" id="cd18787">
    <property type="entry name" value="SF2_C_DEAD"/>
    <property type="match status" value="1"/>
</dbReference>
<dbReference type="Gene3D" id="3.40.50.300">
    <property type="entry name" value="P-loop containing nucleotide triphosphate hydrolases"/>
    <property type="match status" value="2"/>
</dbReference>
<dbReference type="InterPro" id="IPR011545">
    <property type="entry name" value="DEAD/DEAH_box_helicase_dom"/>
</dbReference>
<dbReference type="InterPro" id="IPR014001">
    <property type="entry name" value="Helicase_ATP-bd"/>
</dbReference>
<dbReference type="InterPro" id="IPR001650">
    <property type="entry name" value="Helicase_C-like"/>
</dbReference>
<dbReference type="InterPro" id="IPR027417">
    <property type="entry name" value="P-loop_NTPase"/>
</dbReference>
<dbReference type="InterPro" id="IPR000629">
    <property type="entry name" value="RNA-helicase_DEAD-box_CS"/>
</dbReference>
<dbReference type="PANTHER" id="PTHR47958">
    <property type="entry name" value="ATP-DEPENDENT RNA HELICASE DBP3"/>
    <property type="match status" value="1"/>
</dbReference>
<dbReference type="Pfam" id="PF00270">
    <property type="entry name" value="DEAD"/>
    <property type="match status" value="1"/>
</dbReference>
<dbReference type="Pfam" id="PF00271">
    <property type="entry name" value="Helicase_C"/>
    <property type="match status" value="1"/>
</dbReference>
<dbReference type="SMART" id="SM00487">
    <property type="entry name" value="DEXDc"/>
    <property type="match status" value="1"/>
</dbReference>
<dbReference type="SMART" id="SM00490">
    <property type="entry name" value="HELICc"/>
    <property type="match status" value="1"/>
</dbReference>
<dbReference type="SUPFAM" id="SSF52540">
    <property type="entry name" value="P-loop containing nucleoside triphosphate hydrolases"/>
    <property type="match status" value="1"/>
</dbReference>
<dbReference type="PROSITE" id="PS00039">
    <property type="entry name" value="DEAD_ATP_HELICASE"/>
    <property type="match status" value="1"/>
</dbReference>
<dbReference type="PROSITE" id="PS51192">
    <property type="entry name" value="HELICASE_ATP_BIND_1"/>
    <property type="match status" value="1"/>
</dbReference>
<dbReference type="PROSITE" id="PS51194">
    <property type="entry name" value="HELICASE_CTER"/>
    <property type="match status" value="1"/>
</dbReference>
<name>DBP3_CHAGB</name>
<organism>
    <name type="scientific">Chaetomium globosum (strain ATCC 6205 / CBS 148.51 / DSM 1962 / NBRC 6347 / NRRL 1970)</name>
    <name type="common">Soil fungus</name>
    <dbReference type="NCBI Taxonomy" id="306901"/>
    <lineage>
        <taxon>Eukaryota</taxon>
        <taxon>Fungi</taxon>
        <taxon>Dikarya</taxon>
        <taxon>Ascomycota</taxon>
        <taxon>Pezizomycotina</taxon>
        <taxon>Sordariomycetes</taxon>
        <taxon>Sordariomycetidae</taxon>
        <taxon>Sordariales</taxon>
        <taxon>Chaetomiaceae</taxon>
        <taxon>Chaetomium</taxon>
    </lineage>
</organism>
<evidence type="ECO:0000250" key="1"/>
<evidence type="ECO:0000255" key="2">
    <source>
        <dbReference type="PROSITE-ProRule" id="PRU00541"/>
    </source>
</evidence>
<evidence type="ECO:0000255" key="3">
    <source>
        <dbReference type="PROSITE-ProRule" id="PRU00542"/>
    </source>
</evidence>
<evidence type="ECO:0000256" key="4">
    <source>
        <dbReference type="SAM" id="MobiDB-lite"/>
    </source>
</evidence>
<evidence type="ECO:0000305" key="5"/>
<accession>Q2GUI4</accession>